<organism>
    <name type="scientific">Streptococcus sanguinis (strain SK36)</name>
    <dbReference type="NCBI Taxonomy" id="388919"/>
    <lineage>
        <taxon>Bacteria</taxon>
        <taxon>Bacillati</taxon>
        <taxon>Bacillota</taxon>
        <taxon>Bacilli</taxon>
        <taxon>Lactobacillales</taxon>
        <taxon>Streptococcaceae</taxon>
        <taxon>Streptococcus</taxon>
    </lineage>
</organism>
<dbReference type="EMBL" id="CP000387">
    <property type="protein sequence ID" value="ABN44990.1"/>
    <property type="molecule type" value="Genomic_DNA"/>
</dbReference>
<dbReference type="RefSeq" id="WP_002894882.1">
    <property type="nucleotide sequence ID" value="NC_009009.1"/>
</dbReference>
<dbReference type="RefSeq" id="YP_001035540.1">
    <property type="nucleotide sequence ID" value="NC_009009.1"/>
</dbReference>
<dbReference type="SMR" id="A3CP85"/>
<dbReference type="STRING" id="388919.SSA_1601"/>
<dbReference type="GeneID" id="93786979"/>
<dbReference type="KEGG" id="ssa:SSA_1601"/>
<dbReference type="PATRIC" id="fig|388919.9.peg.1519"/>
<dbReference type="eggNOG" id="COG0691">
    <property type="taxonomic scope" value="Bacteria"/>
</dbReference>
<dbReference type="HOGENOM" id="CLU_108953_0_0_9"/>
<dbReference type="OrthoDB" id="9805462at2"/>
<dbReference type="PRO" id="PR:A3CP85"/>
<dbReference type="Proteomes" id="UP000002148">
    <property type="component" value="Chromosome"/>
</dbReference>
<dbReference type="GO" id="GO:0005829">
    <property type="term" value="C:cytosol"/>
    <property type="evidence" value="ECO:0007669"/>
    <property type="project" value="TreeGrafter"/>
</dbReference>
<dbReference type="GO" id="GO:0003723">
    <property type="term" value="F:RNA binding"/>
    <property type="evidence" value="ECO:0007669"/>
    <property type="project" value="UniProtKB-UniRule"/>
</dbReference>
<dbReference type="GO" id="GO:0070929">
    <property type="term" value="P:trans-translation"/>
    <property type="evidence" value="ECO:0007669"/>
    <property type="project" value="UniProtKB-UniRule"/>
</dbReference>
<dbReference type="CDD" id="cd09294">
    <property type="entry name" value="SmpB"/>
    <property type="match status" value="1"/>
</dbReference>
<dbReference type="Gene3D" id="2.40.280.10">
    <property type="match status" value="1"/>
</dbReference>
<dbReference type="HAMAP" id="MF_00023">
    <property type="entry name" value="SmpB"/>
    <property type="match status" value="1"/>
</dbReference>
<dbReference type="InterPro" id="IPR023620">
    <property type="entry name" value="SmpB"/>
</dbReference>
<dbReference type="InterPro" id="IPR000037">
    <property type="entry name" value="SsrA-bd_prot"/>
</dbReference>
<dbReference type="InterPro" id="IPR020081">
    <property type="entry name" value="SsrA-bd_prot_CS"/>
</dbReference>
<dbReference type="NCBIfam" id="NF003843">
    <property type="entry name" value="PRK05422.1"/>
    <property type="match status" value="1"/>
</dbReference>
<dbReference type="NCBIfam" id="TIGR00086">
    <property type="entry name" value="smpB"/>
    <property type="match status" value="1"/>
</dbReference>
<dbReference type="PANTHER" id="PTHR30308:SF2">
    <property type="entry name" value="SSRA-BINDING PROTEIN"/>
    <property type="match status" value="1"/>
</dbReference>
<dbReference type="PANTHER" id="PTHR30308">
    <property type="entry name" value="TMRNA-BINDING COMPONENT OF TRANS-TRANSLATION TAGGING COMPLEX"/>
    <property type="match status" value="1"/>
</dbReference>
<dbReference type="Pfam" id="PF01668">
    <property type="entry name" value="SmpB"/>
    <property type="match status" value="1"/>
</dbReference>
<dbReference type="SUPFAM" id="SSF74982">
    <property type="entry name" value="Small protein B (SmpB)"/>
    <property type="match status" value="1"/>
</dbReference>
<dbReference type="PROSITE" id="PS01317">
    <property type="entry name" value="SSRP"/>
    <property type="match status" value="1"/>
</dbReference>
<gene>
    <name evidence="1" type="primary">smpB</name>
    <name type="ordered locus">SSA_1601</name>
</gene>
<name>SSRP_STRSV</name>
<feature type="chain" id="PRO_1000002170" description="SsrA-binding protein">
    <location>
        <begin position="1"/>
        <end position="155"/>
    </location>
</feature>
<evidence type="ECO:0000255" key="1">
    <source>
        <dbReference type="HAMAP-Rule" id="MF_00023"/>
    </source>
</evidence>
<comment type="function">
    <text evidence="1">Required for rescue of stalled ribosomes mediated by trans-translation. Binds to transfer-messenger RNA (tmRNA), required for stable association of tmRNA with ribosomes. tmRNA and SmpB together mimic tRNA shape, replacing the anticodon stem-loop with SmpB. tmRNA is encoded by the ssrA gene; the 2 termini fold to resemble tRNA(Ala) and it encodes a 'tag peptide', a short internal open reading frame. During trans-translation Ala-aminoacylated tmRNA acts like a tRNA, entering the A-site of stalled ribosomes, displacing the stalled mRNA. The ribosome then switches to translate the ORF on the tmRNA; the nascent peptide is terminated with the 'tag peptide' encoded by the tmRNA and targeted for degradation. The ribosome is freed to recommence translation, which seems to be the essential function of trans-translation.</text>
</comment>
<comment type="subcellular location">
    <subcellularLocation>
        <location evidence="1">Cytoplasm</location>
    </subcellularLocation>
    <text evidence="1">The tmRNA-SmpB complex associates with stalled 70S ribosomes.</text>
</comment>
<comment type="similarity">
    <text evidence="1">Belongs to the SmpB family.</text>
</comment>
<protein>
    <recommendedName>
        <fullName evidence="1">SsrA-binding protein</fullName>
    </recommendedName>
    <alternativeName>
        <fullName evidence="1">Small protein B</fullName>
    </alternativeName>
</protein>
<reference key="1">
    <citation type="journal article" date="2007" name="J. Bacteriol.">
        <title>Genome of the opportunistic pathogen Streptococcus sanguinis.</title>
        <authorList>
            <person name="Xu P."/>
            <person name="Alves J.M."/>
            <person name="Kitten T."/>
            <person name="Brown A."/>
            <person name="Chen Z."/>
            <person name="Ozaki L.S."/>
            <person name="Manque P."/>
            <person name="Ge X."/>
            <person name="Serrano M.G."/>
            <person name="Puiu D."/>
            <person name="Hendricks S."/>
            <person name="Wang Y."/>
            <person name="Chaplin M.D."/>
            <person name="Akan D."/>
            <person name="Paik S."/>
            <person name="Peterson D.L."/>
            <person name="Macrina F.L."/>
            <person name="Buck G.A."/>
        </authorList>
    </citation>
    <scope>NUCLEOTIDE SEQUENCE [LARGE SCALE GENOMIC DNA]</scope>
    <source>
        <strain>SK36</strain>
    </source>
</reference>
<accession>A3CP85</accession>
<sequence length="155" mass="17827">MAKGEGKVVAQNKKARHDYTIVDTIEAGMVLTGTEIKSVRAARINLKDGFAQIKNGEAWLSNVHIAPYEEGNIWNQEPERRRKLLLHKKQIQKLEQETKGTGMTLVPLKVYLKDGYAKLLLGLAKGKHDYDKRESIKRREQNRDIARQMKNFNTR</sequence>
<proteinExistence type="inferred from homology"/>
<keyword id="KW-0963">Cytoplasm</keyword>
<keyword id="KW-1185">Reference proteome</keyword>
<keyword id="KW-0694">RNA-binding</keyword>